<gene>
    <name type="primary">lacD1</name>
    <name type="synonym">lacD.1</name>
    <name type="ordered locus">SpyM3_1482</name>
</gene>
<evidence type="ECO:0000305" key="1"/>
<dbReference type="EC" id="4.1.2.40"/>
<dbReference type="EMBL" id="AE014074">
    <property type="protein sequence ID" value="AAM80089.1"/>
    <property type="molecule type" value="Genomic_DNA"/>
</dbReference>
<dbReference type="RefSeq" id="WP_011054918.1">
    <property type="nucleotide sequence ID" value="NC_004070.1"/>
</dbReference>
<dbReference type="SMR" id="P0DC14"/>
<dbReference type="KEGG" id="spg:SpyM3_1482"/>
<dbReference type="HOGENOM" id="CLU_058971_0_1_9"/>
<dbReference type="UniPathway" id="UPA00704">
    <property type="reaction ID" value="UER00716"/>
</dbReference>
<dbReference type="Proteomes" id="UP000000564">
    <property type="component" value="Chromosome"/>
</dbReference>
<dbReference type="GO" id="GO:0061595">
    <property type="term" value="F:6-deoxy-6-sulfofructose-1-phosphate aldolase activity"/>
    <property type="evidence" value="ECO:0007669"/>
    <property type="project" value="TreeGrafter"/>
</dbReference>
<dbReference type="GO" id="GO:0009024">
    <property type="term" value="F:tagatose-6-phosphate kinase activity"/>
    <property type="evidence" value="ECO:0007669"/>
    <property type="project" value="InterPro"/>
</dbReference>
<dbReference type="GO" id="GO:0009025">
    <property type="term" value="F:tagatose-bisphosphate aldolase activity"/>
    <property type="evidence" value="ECO:0007669"/>
    <property type="project" value="UniProtKB-UniRule"/>
</dbReference>
<dbReference type="GO" id="GO:1902777">
    <property type="term" value="P:6-sulfoquinovose(1-) catabolic process"/>
    <property type="evidence" value="ECO:0007669"/>
    <property type="project" value="TreeGrafter"/>
</dbReference>
<dbReference type="GO" id="GO:2001059">
    <property type="term" value="P:D-tagatose 6-phosphate catabolic process"/>
    <property type="evidence" value="ECO:0007669"/>
    <property type="project" value="UniProtKB-UniRule"/>
</dbReference>
<dbReference type="GO" id="GO:0019512">
    <property type="term" value="P:lactose catabolic process via tagatose-6-phosphate"/>
    <property type="evidence" value="ECO:0007669"/>
    <property type="project" value="InterPro"/>
</dbReference>
<dbReference type="FunFam" id="3.20.20.70:FF:000137">
    <property type="entry name" value="Tagatose 1,6-diphosphate aldolase 2"/>
    <property type="match status" value="1"/>
</dbReference>
<dbReference type="Gene3D" id="3.20.20.70">
    <property type="entry name" value="Aldolase class I"/>
    <property type="match status" value="1"/>
</dbReference>
<dbReference type="HAMAP" id="MF_00734">
    <property type="entry name" value="LacD"/>
    <property type="match status" value="1"/>
</dbReference>
<dbReference type="InterPro" id="IPR013785">
    <property type="entry name" value="Aldolase_TIM"/>
</dbReference>
<dbReference type="InterPro" id="IPR002915">
    <property type="entry name" value="DeoC/FbaB/LacD_aldolase"/>
</dbReference>
<dbReference type="InterPro" id="IPR050552">
    <property type="entry name" value="LacD_aldolase"/>
</dbReference>
<dbReference type="InterPro" id="IPR005927">
    <property type="entry name" value="Tag_1.6-dipho_adolase"/>
</dbReference>
<dbReference type="NCBIfam" id="TIGR01232">
    <property type="entry name" value="lacD"/>
    <property type="match status" value="1"/>
</dbReference>
<dbReference type="NCBIfam" id="NF003180">
    <property type="entry name" value="PRK04161.1"/>
    <property type="match status" value="1"/>
</dbReference>
<dbReference type="NCBIfam" id="NF009065">
    <property type="entry name" value="PRK12399.1"/>
    <property type="match status" value="1"/>
</dbReference>
<dbReference type="NCBIfam" id="NF009498">
    <property type="entry name" value="PRK12858.1"/>
    <property type="match status" value="1"/>
</dbReference>
<dbReference type="PANTHER" id="PTHR39340">
    <property type="entry name" value="SULFOFRUCTOSEPHOSPHATE ALDOLASE"/>
    <property type="match status" value="1"/>
</dbReference>
<dbReference type="PANTHER" id="PTHR39340:SF1">
    <property type="entry name" value="SULFOFRUCTOSEPHOSPHATE ALDOLASE"/>
    <property type="match status" value="1"/>
</dbReference>
<dbReference type="Pfam" id="PF01791">
    <property type="entry name" value="DeoC"/>
    <property type="match status" value="1"/>
</dbReference>
<dbReference type="SMART" id="SM01133">
    <property type="entry name" value="DeoC"/>
    <property type="match status" value="1"/>
</dbReference>
<dbReference type="SUPFAM" id="SSF51569">
    <property type="entry name" value="Aldolase"/>
    <property type="match status" value="1"/>
</dbReference>
<name>LACD1_STRP3</name>
<keyword id="KW-0423">Lactose metabolism</keyword>
<keyword id="KW-0456">Lyase</keyword>
<feature type="chain" id="PRO_0000203962" description="Tagatose 1,6-diphosphate aldolase 1">
    <location>
        <begin position="1"/>
        <end position="325"/>
    </location>
</feature>
<proteinExistence type="inferred from homology"/>
<accession>P0DC14</accession>
<accession>Q879I5</accession>
<accession>Q8K654</accession>
<sequence length="325" mass="36011">MTITANKRHYLEKVSHQGIISALAFDQRGALKQMMAAHQEGEATVTQIETLKVLVSEELTPYASSILLDPEYGLLATKVKANQTGLLLVYEKTGYDATTTSRLPDCLVEWSVKRLKAAGADAIKFLLYYDVDGDEQINLQKQAYIERIGSECTAEDIPFFLELLSYDERISDNNSAAYAKLKPHKVNGAMSVFSDKRFGVDVLKVEVPVNMAYVEGFTEGEVHYSQAEAIKAFQDQEAASHLPYIYLSAGVSAKLFQETLYFAAAAGAQFSGVLCGRATWAGSVPVYITKGEDEARKWLCTEGFQNIDELNRVLEETASPWTEKI</sequence>
<organism>
    <name type="scientific">Streptococcus pyogenes serotype M3 (strain ATCC BAA-595 / MGAS315)</name>
    <dbReference type="NCBI Taxonomy" id="198466"/>
    <lineage>
        <taxon>Bacteria</taxon>
        <taxon>Bacillati</taxon>
        <taxon>Bacillota</taxon>
        <taxon>Bacilli</taxon>
        <taxon>Lactobacillales</taxon>
        <taxon>Streptococcaceae</taxon>
        <taxon>Streptococcus</taxon>
    </lineage>
</organism>
<protein>
    <recommendedName>
        <fullName>Tagatose 1,6-diphosphate aldolase 1</fullName>
        <ecNumber>4.1.2.40</ecNumber>
    </recommendedName>
    <alternativeName>
        <fullName>D-tagatose-1,6-bisphosphate aldolase 1</fullName>
    </alternativeName>
    <alternativeName>
        <fullName>Tagatose-bisphosphate aldolase 1</fullName>
    </alternativeName>
</protein>
<reference key="1">
    <citation type="journal article" date="2002" name="Proc. Natl. Acad. Sci. U.S.A.">
        <title>Genome sequence of a serotype M3 strain of group A Streptococcus: phage-encoded toxins, the high-virulence phenotype, and clone emergence.</title>
        <authorList>
            <person name="Beres S.B."/>
            <person name="Sylva G.L."/>
            <person name="Barbian K.D."/>
            <person name="Lei B."/>
            <person name="Hoff J.S."/>
            <person name="Mammarella N.D."/>
            <person name="Liu M.-Y."/>
            <person name="Smoot J.C."/>
            <person name="Porcella S.F."/>
            <person name="Parkins L.D."/>
            <person name="Campbell D.S."/>
            <person name="Smith T.M."/>
            <person name="McCormick J.K."/>
            <person name="Leung D.Y.M."/>
            <person name="Schlievert P.M."/>
            <person name="Musser J.M."/>
        </authorList>
    </citation>
    <scope>NUCLEOTIDE SEQUENCE [LARGE SCALE GENOMIC DNA]</scope>
    <source>
        <strain>ATCC BAA-595 / MGAS315</strain>
    </source>
</reference>
<comment type="catalytic activity">
    <reaction>
        <text>D-tagatofuranose 1,6-bisphosphate = D-glyceraldehyde 3-phosphate + dihydroxyacetone phosphate</text>
        <dbReference type="Rhea" id="RHEA:22948"/>
        <dbReference type="ChEBI" id="CHEBI:57642"/>
        <dbReference type="ChEBI" id="CHEBI:58694"/>
        <dbReference type="ChEBI" id="CHEBI:59776"/>
        <dbReference type="EC" id="4.1.2.40"/>
    </reaction>
</comment>
<comment type="pathway">
    <text>Carbohydrate metabolism; D-tagatose 6-phosphate degradation; D-glyceraldehyde 3-phosphate and glycerone phosphate from D-tagatose 6-phosphate: step 2/2.</text>
</comment>
<comment type="similarity">
    <text evidence="1">Belongs to the aldolase LacD family.</text>
</comment>